<dbReference type="EMBL" id="CP001110">
    <property type="protein sequence ID" value="ACF42650.1"/>
    <property type="molecule type" value="Genomic_DNA"/>
</dbReference>
<dbReference type="RefSeq" id="WP_012507145.1">
    <property type="nucleotide sequence ID" value="NC_011060.1"/>
</dbReference>
<dbReference type="SMR" id="B4SC70"/>
<dbReference type="STRING" id="324925.Ppha_0317"/>
<dbReference type="KEGG" id="pph:Ppha_0317"/>
<dbReference type="eggNOG" id="COG0203">
    <property type="taxonomic scope" value="Bacteria"/>
</dbReference>
<dbReference type="HOGENOM" id="CLU_074407_0_1_10"/>
<dbReference type="OrthoDB" id="9809073at2"/>
<dbReference type="Proteomes" id="UP000002724">
    <property type="component" value="Chromosome"/>
</dbReference>
<dbReference type="GO" id="GO:0022625">
    <property type="term" value="C:cytosolic large ribosomal subunit"/>
    <property type="evidence" value="ECO:0007669"/>
    <property type="project" value="TreeGrafter"/>
</dbReference>
<dbReference type="GO" id="GO:0003735">
    <property type="term" value="F:structural constituent of ribosome"/>
    <property type="evidence" value="ECO:0007669"/>
    <property type="project" value="InterPro"/>
</dbReference>
<dbReference type="GO" id="GO:0006412">
    <property type="term" value="P:translation"/>
    <property type="evidence" value="ECO:0007669"/>
    <property type="project" value="UniProtKB-UniRule"/>
</dbReference>
<dbReference type="Gene3D" id="3.90.1030.10">
    <property type="entry name" value="Ribosomal protein L17"/>
    <property type="match status" value="1"/>
</dbReference>
<dbReference type="HAMAP" id="MF_01368">
    <property type="entry name" value="Ribosomal_bL17"/>
    <property type="match status" value="1"/>
</dbReference>
<dbReference type="InterPro" id="IPR000456">
    <property type="entry name" value="Ribosomal_bL17"/>
</dbReference>
<dbReference type="InterPro" id="IPR047859">
    <property type="entry name" value="Ribosomal_bL17_CS"/>
</dbReference>
<dbReference type="InterPro" id="IPR036373">
    <property type="entry name" value="Ribosomal_bL17_sf"/>
</dbReference>
<dbReference type="NCBIfam" id="TIGR00059">
    <property type="entry name" value="L17"/>
    <property type="match status" value="1"/>
</dbReference>
<dbReference type="PANTHER" id="PTHR14413:SF16">
    <property type="entry name" value="LARGE RIBOSOMAL SUBUNIT PROTEIN BL17M"/>
    <property type="match status" value="1"/>
</dbReference>
<dbReference type="PANTHER" id="PTHR14413">
    <property type="entry name" value="RIBOSOMAL PROTEIN L17"/>
    <property type="match status" value="1"/>
</dbReference>
<dbReference type="Pfam" id="PF01196">
    <property type="entry name" value="Ribosomal_L17"/>
    <property type="match status" value="1"/>
</dbReference>
<dbReference type="SUPFAM" id="SSF64263">
    <property type="entry name" value="Prokaryotic ribosomal protein L17"/>
    <property type="match status" value="1"/>
</dbReference>
<dbReference type="PROSITE" id="PS01167">
    <property type="entry name" value="RIBOSOMAL_L17"/>
    <property type="match status" value="1"/>
</dbReference>
<sequence>MRKVKPARKLGRTAAHRKATLSNLSTQLLVYKRIETTEAKAKETRRVVEKIITKARKGTVHAQREIFKDIRDKQAIRILFEEIVAKVGTRQGGYTRVIKLAPRFGDAAKMAVIELVDYQEAPSASQKTGKQDRAKRVKGSKKTAEAAVSVAG</sequence>
<comment type="subunit">
    <text evidence="1">Part of the 50S ribosomal subunit. Contacts protein L32.</text>
</comment>
<comment type="similarity">
    <text evidence="1">Belongs to the bacterial ribosomal protein bL17 family.</text>
</comment>
<reference key="1">
    <citation type="submission" date="2008-06" db="EMBL/GenBank/DDBJ databases">
        <title>Complete sequence of Pelodictyon phaeoclathratiforme BU-1.</title>
        <authorList>
            <consortium name="US DOE Joint Genome Institute"/>
            <person name="Lucas S."/>
            <person name="Copeland A."/>
            <person name="Lapidus A."/>
            <person name="Glavina del Rio T."/>
            <person name="Dalin E."/>
            <person name="Tice H."/>
            <person name="Bruce D."/>
            <person name="Goodwin L."/>
            <person name="Pitluck S."/>
            <person name="Schmutz J."/>
            <person name="Larimer F."/>
            <person name="Land M."/>
            <person name="Hauser L."/>
            <person name="Kyrpides N."/>
            <person name="Mikhailova N."/>
            <person name="Liu Z."/>
            <person name="Li T."/>
            <person name="Zhao F."/>
            <person name="Overmann J."/>
            <person name="Bryant D.A."/>
            <person name="Richardson P."/>
        </authorList>
    </citation>
    <scope>NUCLEOTIDE SEQUENCE [LARGE SCALE GENOMIC DNA]</scope>
    <source>
        <strain>DSM 5477 / BU-1</strain>
    </source>
</reference>
<organism>
    <name type="scientific">Pelodictyon phaeoclathratiforme (strain DSM 5477 / BU-1)</name>
    <dbReference type="NCBI Taxonomy" id="324925"/>
    <lineage>
        <taxon>Bacteria</taxon>
        <taxon>Pseudomonadati</taxon>
        <taxon>Chlorobiota</taxon>
        <taxon>Chlorobiia</taxon>
        <taxon>Chlorobiales</taxon>
        <taxon>Chlorobiaceae</taxon>
        <taxon>Chlorobium/Pelodictyon group</taxon>
        <taxon>Pelodictyon</taxon>
    </lineage>
</organism>
<name>RL17_PELPB</name>
<accession>B4SC70</accession>
<gene>
    <name evidence="1" type="primary">rplQ</name>
    <name type="ordered locus">Ppha_0317</name>
</gene>
<proteinExistence type="inferred from homology"/>
<keyword id="KW-1185">Reference proteome</keyword>
<keyword id="KW-0687">Ribonucleoprotein</keyword>
<keyword id="KW-0689">Ribosomal protein</keyword>
<feature type="chain" id="PRO_1000144460" description="Large ribosomal subunit protein bL17">
    <location>
        <begin position="1"/>
        <end position="152"/>
    </location>
</feature>
<feature type="region of interest" description="Disordered" evidence="2">
    <location>
        <begin position="121"/>
        <end position="140"/>
    </location>
</feature>
<protein>
    <recommendedName>
        <fullName evidence="1">Large ribosomal subunit protein bL17</fullName>
    </recommendedName>
    <alternativeName>
        <fullName evidence="3">50S ribosomal protein L17</fullName>
    </alternativeName>
</protein>
<evidence type="ECO:0000255" key="1">
    <source>
        <dbReference type="HAMAP-Rule" id="MF_01368"/>
    </source>
</evidence>
<evidence type="ECO:0000256" key="2">
    <source>
        <dbReference type="SAM" id="MobiDB-lite"/>
    </source>
</evidence>
<evidence type="ECO:0000305" key="3"/>